<comment type="function">
    <text evidence="1">Involved in the biogenesis of TorA. Acts on TorA before the insertion of the molybdenum cofactor and, as a result, probably favors a conformation of the apoenzyme that is competent for acquiring the cofactor.</text>
</comment>
<comment type="subcellular location">
    <subcellularLocation>
        <location evidence="1">Cytoplasm</location>
    </subcellularLocation>
</comment>
<comment type="similarity">
    <text evidence="1">Belongs to the TorD/DmsD family. TorD subfamily.</text>
</comment>
<organism>
    <name type="scientific">Salmonella gallinarum (strain 287/91 / NCTC 13346)</name>
    <dbReference type="NCBI Taxonomy" id="550538"/>
    <lineage>
        <taxon>Bacteria</taxon>
        <taxon>Pseudomonadati</taxon>
        <taxon>Pseudomonadota</taxon>
        <taxon>Gammaproteobacteria</taxon>
        <taxon>Enterobacterales</taxon>
        <taxon>Enterobacteriaceae</taxon>
        <taxon>Salmonella</taxon>
    </lineage>
</organism>
<evidence type="ECO:0000255" key="1">
    <source>
        <dbReference type="HAMAP-Rule" id="MF_01150"/>
    </source>
</evidence>
<feature type="chain" id="PRO_1000137514" description="Chaperone protein TorD">
    <location>
        <begin position="1"/>
        <end position="210"/>
    </location>
</feature>
<dbReference type="EMBL" id="AM933173">
    <property type="protein sequence ID" value="CAR39399.1"/>
    <property type="molecule type" value="Genomic_DNA"/>
</dbReference>
<dbReference type="RefSeq" id="WP_000595416.1">
    <property type="nucleotide sequence ID" value="NC_011274.1"/>
</dbReference>
<dbReference type="SMR" id="B5RG05"/>
<dbReference type="KEGG" id="seg:SG3612"/>
<dbReference type="HOGENOM" id="CLU_077650_4_0_6"/>
<dbReference type="Proteomes" id="UP000008321">
    <property type="component" value="Chromosome"/>
</dbReference>
<dbReference type="GO" id="GO:0005737">
    <property type="term" value="C:cytoplasm"/>
    <property type="evidence" value="ECO:0007669"/>
    <property type="project" value="UniProtKB-SubCell"/>
</dbReference>
<dbReference type="GO" id="GO:0051259">
    <property type="term" value="P:protein complex oligomerization"/>
    <property type="evidence" value="ECO:0007669"/>
    <property type="project" value="InterPro"/>
</dbReference>
<dbReference type="GO" id="GO:0006457">
    <property type="term" value="P:protein folding"/>
    <property type="evidence" value="ECO:0007669"/>
    <property type="project" value="UniProtKB-UniRule"/>
</dbReference>
<dbReference type="Gene3D" id="1.20.120.1820">
    <property type="match status" value="1"/>
</dbReference>
<dbReference type="Gene3D" id="1.20.1280.20">
    <property type="entry name" value="HscB, C-terminal domain"/>
    <property type="match status" value="1"/>
</dbReference>
<dbReference type="HAMAP" id="MF_01150">
    <property type="entry name" value="TorD"/>
    <property type="match status" value="1"/>
</dbReference>
<dbReference type="InterPro" id="IPR023069">
    <property type="entry name" value="Chaperone_TorD"/>
</dbReference>
<dbReference type="InterPro" id="IPR020945">
    <property type="entry name" value="DMSO/NO3_reduct_chaperone"/>
</dbReference>
<dbReference type="InterPro" id="IPR036386">
    <property type="entry name" value="HscB_C_sf"/>
</dbReference>
<dbReference type="InterPro" id="IPR036411">
    <property type="entry name" value="TorD-like_sf"/>
</dbReference>
<dbReference type="InterPro" id="IPR050289">
    <property type="entry name" value="TorD/DmsD_chaperones"/>
</dbReference>
<dbReference type="NCBIfam" id="NF003442">
    <property type="entry name" value="PRK04976.1"/>
    <property type="match status" value="1"/>
</dbReference>
<dbReference type="PANTHER" id="PTHR34227:SF11">
    <property type="entry name" value="CHAPERONE PROTEIN TORD"/>
    <property type="match status" value="1"/>
</dbReference>
<dbReference type="PANTHER" id="PTHR34227">
    <property type="entry name" value="CHAPERONE PROTEIN YCDY"/>
    <property type="match status" value="1"/>
</dbReference>
<dbReference type="Pfam" id="PF02613">
    <property type="entry name" value="Nitrate_red_del"/>
    <property type="match status" value="1"/>
</dbReference>
<dbReference type="SUPFAM" id="SSF89155">
    <property type="entry name" value="TorD-like"/>
    <property type="match status" value="1"/>
</dbReference>
<reference key="1">
    <citation type="journal article" date="2008" name="Genome Res.">
        <title>Comparative genome analysis of Salmonella enteritidis PT4 and Salmonella gallinarum 287/91 provides insights into evolutionary and host adaptation pathways.</title>
        <authorList>
            <person name="Thomson N.R."/>
            <person name="Clayton D.J."/>
            <person name="Windhorst D."/>
            <person name="Vernikos G."/>
            <person name="Davidson S."/>
            <person name="Churcher C."/>
            <person name="Quail M.A."/>
            <person name="Stevens M."/>
            <person name="Jones M.A."/>
            <person name="Watson M."/>
            <person name="Barron A."/>
            <person name="Layton A."/>
            <person name="Pickard D."/>
            <person name="Kingsley R.A."/>
            <person name="Bignell A."/>
            <person name="Clark L."/>
            <person name="Harris B."/>
            <person name="Ormond D."/>
            <person name="Abdellah Z."/>
            <person name="Brooks K."/>
            <person name="Cherevach I."/>
            <person name="Chillingworth T."/>
            <person name="Woodward J."/>
            <person name="Norberczak H."/>
            <person name="Lord A."/>
            <person name="Arrowsmith C."/>
            <person name="Jagels K."/>
            <person name="Moule S."/>
            <person name="Mungall K."/>
            <person name="Saunders M."/>
            <person name="Whitehead S."/>
            <person name="Chabalgoity J.A."/>
            <person name="Maskell D."/>
            <person name="Humphreys T."/>
            <person name="Roberts M."/>
            <person name="Barrow P.A."/>
            <person name="Dougan G."/>
            <person name="Parkhill J."/>
        </authorList>
    </citation>
    <scope>NUCLEOTIDE SEQUENCE [LARGE SCALE GENOMIC DNA]</scope>
    <source>
        <strain>287/91 / NCTC 13346</strain>
    </source>
</reference>
<name>TORD_SALG2</name>
<proteinExistence type="inferred from homology"/>
<gene>
    <name evidence="1" type="primary">torD</name>
    <name type="ordered locus">SG3612</name>
</gene>
<keyword id="KW-0143">Chaperone</keyword>
<keyword id="KW-0963">Cytoplasm</keyword>
<protein>
    <recommendedName>
        <fullName evidence="1">Chaperone protein TorD</fullName>
    </recommendedName>
</protein>
<accession>B5RG05</accession>
<sequence length="210" mass="23798">MIKQPALAQEQYACVYAWLALLFFREVDDEGLIQLQSAEIADWLALLKRQPALAASVALLEQKIAALSLRQDAQLELAADFCGLFLMTDKKSALPYASQYPQQEPGMIKHLLLEAGMEVNDDFKEPADHLAIYLELLSHLHFSLGESFQQRRMNKLRQKTLSSLLEWLPEFTNNCLKHDPYGFYAALSQLLLAIVRFDDGKEDLSIVAVE</sequence>